<feature type="chain" id="PRO_0000156488" description="Polyamine aminopropyltransferase">
    <location>
        <begin position="1"/>
        <end position="523"/>
    </location>
</feature>
<feature type="transmembrane region" description="Helical" evidence="1">
    <location>
        <begin position="20"/>
        <end position="40"/>
    </location>
</feature>
<feature type="transmembrane region" description="Helical" evidence="1">
    <location>
        <begin position="51"/>
        <end position="71"/>
    </location>
</feature>
<feature type="transmembrane region" description="Helical" evidence="1">
    <location>
        <begin position="88"/>
        <end position="108"/>
    </location>
</feature>
<feature type="transmembrane region" description="Helical" evidence="1">
    <location>
        <begin position="116"/>
        <end position="136"/>
    </location>
</feature>
<feature type="transmembrane region" description="Helical" evidence="1">
    <location>
        <begin position="164"/>
        <end position="184"/>
    </location>
</feature>
<feature type="transmembrane region" description="Helical" evidence="1">
    <location>
        <begin position="186"/>
        <end position="206"/>
    </location>
</feature>
<feature type="transmembrane region" description="Helical" evidence="1">
    <location>
        <begin position="215"/>
        <end position="235"/>
    </location>
</feature>
<feature type="domain" description="PABS" evidence="1">
    <location>
        <begin position="231"/>
        <end position="465"/>
    </location>
</feature>
<feature type="region of interest" description="Spermidine synthase">
    <location>
        <begin position="203"/>
        <end position="478"/>
    </location>
</feature>
<feature type="active site" description="Proton acceptor" evidence="1">
    <location>
        <position position="386"/>
    </location>
</feature>
<feature type="binding site" evidence="1">
    <location>
        <position position="261"/>
    </location>
    <ligand>
        <name>S-methyl-5'-thioadenosine</name>
        <dbReference type="ChEBI" id="CHEBI:17509"/>
    </ligand>
</feature>
<feature type="binding site" evidence="1">
    <location>
        <position position="313"/>
    </location>
    <ligand>
        <name>spermidine</name>
        <dbReference type="ChEBI" id="CHEBI:57834"/>
    </ligand>
</feature>
<feature type="binding site" evidence="1">
    <location>
        <position position="333"/>
    </location>
    <ligand>
        <name>S-methyl-5'-thioadenosine</name>
        <dbReference type="ChEBI" id="CHEBI:17509"/>
    </ligand>
</feature>
<feature type="binding site" evidence="1">
    <location>
        <begin position="365"/>
        <end position="366"/>
    </location>
    <ligand>
        <name>S-methyl-5'-thioadenosine</name>
        <dbReference type="ChEBI" id="CHEBI:17509"/>
    </ligand>
</feature>
<comment type="function">
    <text evidence="1">Catalyzes the irreversible transfer of a propylamine group from the amino donor S-adenosylmethioninamine (decarboxy-AdoMet) to putrescine (1,4-diaminobutane) to yield spermidine.</text>
</comment>
<comment type="catalytic activity">
    <reaction evidence="1">
        <text>S-adenosyl 3-(methylsulfanyl)propylamine + putrescine = S-methyl-5'-thioadenosine + spermidine + H(+)</text>
        <dbReference type="Rhea" id="RHEA:12721"/>
        <dbReference type="ChEBI" id="CHEBI:15378"/>
        <dbReference type="ChEBI" id="CHEBI:17509"/>
        <dbReference type="ChEBI" id="CHEBI:57443"/>
        <dbReference type="ChEBI" id="CHEBI:57834"/>
        <dbReference type="ChEBI" id="CHEBI:326268"/>
        <dbReference type="EC" id="2.5.1.16"/>
    </reaction>
</comment>
<comment type="pathway">
    <text evidence="1">Amine and polyamine biosynthesis; spermidine biosynthesis; spermidine from putrescine: step 1/1.</text>
</comment>
<comment type="subunit">
    <text evidence="1">Homodimer or homotetramer.</text>
</comment>
<comment type="subcellular location">
    <subcellularLocation>
        <location evidence="1">Cell membrane</location>
        <topology evidence="1">Multi-pass membrane protein</topology>
    </subcellularLocation>
</comment>
<comment type="miscellaneous">
    <text>Was identified as a high-confidence drug target.</text>
</comment>
<comment type="similarity">
    <text evidence="1">Belongs to the spermidine/spermine synthase family.</text>
</comment>
<name>SPEE_MYCTU</name>
<gene>
    <name evidence="1" type="primary">speE</name>
    <name type="ordered locus">Rv2601</name>
    <name type="ORF">MTCI270.04c</name>
    <name type="ORF">MTV001.02</name>
</gene>
<reference key="1">
    <citation type="journal article" date="1998" name="Nature">
        <title>Deciphering the biology of Mycobacterium tuberculosis from the complete genome sequence.</title>
        <authorList>
            <person name="Cole S.T."/>
            <person name="Brosch R."/>
            <person name="Parkhill J."/>
            <person name="Garnier T."/>
            <person name="Churcher C.M."/>
            <person name="Harris D.E."/>
            <person name="Gordon S.V."/>
            <person name="Eiglmeier K."/>
            <person name="Gas S."/>
            <person name="Barry C.E. III"/>
            <person name="Tekaia F."/>
            <person name="Badcock K."/>
            <person name="Basham D."/>
            <person name="Brown D."/>
            <person name="Chillingworth T."/>
            <person name="Connor R."/>
            <person name="Davies R.M."/>
            <person name="Devlin K."/>
            <person name="Feltwell T."/>
            <person name="Gentles S."/>
            <person name="Hamlin N."/>
            <person name="Holroyd S."/>
            <person name="Hornsby T."/>
            <person name="Jagels K."/>
            <person name="Krogh A."/>
            <person name="McLean J."/>
            <person name="Moule S."/>
            <person name="Murphy L.D."/>
            <person name="Oliver S."/>
            <person name="Osborne J."/>
            <person name="Quail M.A."/>
            <person name="Rajandream M.A."/>
            <person name="Rogers J."/>
            <person name="Rutter S."/>
            <person name="Seeger K."/>
            <person name="Skelton S."/>
            <person name="Squares S."/>
            <person name="Squares R."/>
            <person name="Sulston J.E."/>
            <person name="Taylor K."/>
            <person name="Whitehead S."/>
            <person name="Barrell B.G."/>
        </authorList>
    </citation>
    <scope>NUCLEOTIDE SEQUENCE [LARGE SCALE GENOMIC DNA]</scope>
    <source>
        <strain>ATCC 25618 / H37Rv</strain>
    </source>
</reference>
<reference key="2">
    <citation type="journal article" date="2008" name="BMC Syst. Biol.">
        <title>targetTB: a target identification pipeline for Mycobacterium tuberculosis through an interactome, reactome and genome-scale structural analysis.</title>
        <authorList>
            <person name="Raman K."/>
            <person name="Yeturu K."/>
            <person name="Chandra N."/>
        </authorList>
    </citation>
    <scope>IDENTIFICATION AS A DRUG TARGET [LARGE SCALE ANALYSIS]</scope>
</reference>
<keyword id="KW-1003">Cell membrane</keyword>
<keyword id="KW-0472">Membrane</keyword>
<keyword id="KW-0620">Polyamine biosynthesis</keyword>
<keyword id="KW-1185">Reference proteome</keyword>
<keyword id="KW-0745">Spermidine biosynthesis</keyword>
<keyword id="KW-0808">Transferase</keyword>
<keyword id="KW-0812">Transmembrane</keyword>
<keyword id="KW-1133">Transmembrane helix</keyword>
<accession>P9WGE5</accession>
<accession>L0TD16</accession>
<accession>O33279</accession>
<dbReference type="EC" id="2.5.1.16" evidence="1"/>
<dbReference type="EMBL" id="AL123456">
    <property type="protein sequence ID" value="CCP45397.1"/>
    <property type="molecule type" value="Genomic_DNA"/>
</dbReference>
<dbReference type="PIR" id="H70886">
    <property type="entry name" value="H70886"/>
</dbReference>
<dbReference type="RefSeq" id="WP_003899392.1">
    <property type="nucleotide sequence ID" value="NZ_NVQJ01000023.1"/>
</dbReference>
<dbReference type="RefSeq" id="YP_177892.1">
    <property type="nucleotide sequence ID" value="NC_000962.3"/>
</dbReference>
<dbReference type="SMR" id="P9WGE5"/>
<dbReference type="FunCoup" id="P9WGE5">
    <property type="interactions" value="44"/>
</dbReference>
<dbReference type="STRING" id="83332.Rv2601"/>
<dbReference type="PaxDb" id="83332-Rv2601"/>
<dbReference type="GeneID" id="887676"/>
<dbReference type="KEGG" id="mtu:Rv2601"/>
<dbReference type="KEGG" id="mtv:RVBD_2601"/>
<dbReference type="TubercuList" id="Rv2601"/>
<dbReference type="eggNOG" id="COG4262">
    <property type="taxonomic scope" value="Bacteria"/>
</dbReference>
<dbReference type="InParanoid" id="P9WGE5"/>
<dbReference type="OrthoDB" id="9793120at2"/>
<dbReference type="PhylomeDB" id="P9WGE5"/>
<dbReference type="UniPathway" id="UPA00248">
    <property type="reaction ID" value="UER00314"/>
</dbReference>
<dbReference type="Proteomes" id="UP000001584">
    <property type="component" value="Chromosome"/>
</dbReference>
<dbReference type="GO" id="GO:0009274">
    <property type="term" value="C:peptidoglycan-based cell wall"/>
    <property type="evidence" value="ECO:0007005"/>
    <property type="project" value="MTBBASE"/>
</dbReference>
<dbReference type="GO" id="GO:0005886">
    <property type="term" value="C:plasma membrane"/>
    <property type="evidence" value="ECO:0007669"/>
    <property type="project" value="UniProtKB-SubCell"/>
</dbReference>
<dbReference type="GO" id="GO:0004766">
    <property type="term" value="F:spermidine synthase activity"/>
    <property type="evidence" value="ECO:0007669"/>
    <property type="project" value="UniProtKB-UniRule"/>
</dbReference>
<dbReference type="GO" id="GO:0010487">
    <property type="term" value="F:thermospermine synthase activity"/>
    <property type="evidence" value="ECO:0007669"/>
    <property type="project" value="UniProtKB-ARBA"/>
</dbReference>
<dbReference type="GO" id="GO:0006596">
    <property type="term" value="P:polyamine biosynthetic process"/>
    <property type="evidence" value="ECO:0000318"/>
    <property type="project" value="GO_Central"/>
</dbReference>
<dbReference type="GO" id="GO:0008295">
    <property type="term" value="P:spermidine biosynthetic process"/>
    <property type="evidence" value="ECO:0007669"/>
    <property type="project" value="UniProtKB-UniRule"/>
</dbReference>
<dbReference type="CDD" id="cd02440">
    <property type="entry name" value="AdoMet_MTases"/>
    <property type="match status" value="1"/>
</dbReference>
<dbReference type="FunFam" id="3.40.50.150:FF:000088">
    <property type="entry name" value="Polyamine aminopropyltransferase"/>
    <property type="match status" value="1"/>
</dbReference>
<dbReference type="Gene3D" id="3.40.50.150">
    <property type="entry name" value="Vaccinia Virus protein VP39"/>
    <property type="match status" value="1"/>
</dbReference>
<dbReference type="HAMAP" id="MF_00198">
    <property type="entry name" value="Spermidine_synth"/>
    <property type="match status" value="1"/>
</dbReference>
<dbReference type="InterPro" id="IPR030374">
    <property type="entry name" value="PABS"/>
</dbReference>
<dbReference type="InterPro" id="IPR030373">
    <property type="entry name" value="PABS_CS"/>
</dbReference>
<dbReference type="InterPro" id="IPR029063">
    <property type="entry name" value="SAM-dependent_MTases_sf"/>
</dbReference>
<dbReference type="InterPro" id="IPR001045">
    <property type="entry name" value="Spermi_synthase"/>
</dbReference>
<dbReference type="NCBIfam" id="NF037959">
    <property type="entry name" value="MFS_SpdSyn"/>
    <property type="match status" value="1"/>
</dbReference>
<dbReference type="NCBIfam" id="NF002956">
    <property type="entry name" value="PRK03612.1"/>
    <property type="match status" value="1"/>
</dbReference>
<dbReference type="PANTHER" id="PTHR43317">
    <property type="entry name" value="THERMOSPERMINE SYNTHASE ACAULIS5"/>
    <property type="match status" value="1"/>
</dbReference>
<dbReference type="PANTHER" id="PTHR43317:SF1">
    <property type="entry name" value="THERMOSPERMINE SYNTHASE ACAULIS5"/>
    <property type="match status" value="1"/>
</dbReference>
<dbReference type="Pfam" id="PF01564">
    <property type="entry name" value="Spermine_synth"/>
    <property type="match status" value="1"/>
</dbReference>
<dbReference type="SUPFAM" id="SSF53335">
    <property type="entry name" value="S-adenosyl-L-methionine-dependent methyltransferases"/>
    <property type="match status" value="1"/>
</dbReference>
<dbReference type="PROSITE" id="PS01330">
    <property type="entry name" value="PABS_1"/>
    <property type="match status" value="1"/>
</dbReference>
<dbReference type="PROSITE" id="PS51006">
    <property type="entry name" value="PABS_2"/>
    <property type="match status" value="1"/>
</dbReference>
<proteinExistence type="inferred from homology"/>
<protein>
    <recommendedName>
        <fullName evidence="1">Polyamine aminopropyltransferase</fullName>
    </recommendedName>
    <alternativeName>
        <fullName evidence="1">Putrescine aminopropyltransferase</fullName>
        <shortName evidence="1">PAPT</shortName>
    </alternativeName>
    <alternativeName>
        <fullName evidence="1">Spermidine synthase</fullName>
        <shortName evidence="1">SPDS</shortName>
        <shortName evidence="1">SPDSY</shortName>
        <ecNumber evidence="1">2.5.1.16</ecNumber>
    </alternativeName>
</protein>
<organism>
    <name type="scientific">Mycobacterium tuberculosis (strain ATCC 25618 / H37Rv)</name>
    <dbReference type="NCBI Taxonomy" id="83332"/>
    <lineage>
        <taxon>Bacteria</taxon>
        <taxon>Bacillati</taxon>
        <taxon>Actinomycetota</taxon>
        <taxon>Actinomycetes</taxon>
        <taxon>Mycobacteriales</taxon>
        <taxon>Mycobacteriaceae</taxon>
        <taxon>Mycobacterium</taxon>
        <taxon>Mycobacterium tuberculosis complex</taxon>
    </lineage>
</organism>
<evidence type="ECO:0000255" key="1">
    <source>
        <dbReference type="HAMAP-Rule" id="MF_00198"/>
    </source>
</evidence>
<sequence>MTSTRQAGEATEASVRWRAVLLAAVAACAACGLVYELALLTLAASLNGGGIVATSLIVAGYIAALGAGALLIKPLLAHAAIAFIAVEAVLGIIGGLSAAALYAAFAFLDELDGSTLVLAVGTALIGGLVGAEVPLLMTLLQRGRVAGAADAGRTLANLNAADYLGALVGGLAWPFLLLPQLGMIRGAAVTGIVNLAAAGVVSIFLLRHVVSGRQLVTALCALAAALGLIATLLVHSHDIETTGRQQLYADPIIAYRHSAYQEIVVTRRGDDLRLYLDGGLQFCTRDEYRYTESLVYPAVSDGARSVLVLGGGDGLAARELLRQPGIEQIVQVELDPAVIELARTTLRDVNAGSLDNPRVHVVIDDAMSWLRGAAVPPAGFDAVIVDLRDPDTPVLGRLYSTEFYALAARALAPGGLMVVQAGSPYSTPTAFWRIISTIRSAGYAVTPYHVHVPTFGDWGFALARLTDIAPTPAVPSTAPALRFLDQQVLEAATVFSGDIRPRTLDPSTLDNPHIVEDMRHGWD</sequence>